<reference key="1">
    <citation type="submission" date="2004-04" db="EMBL/GenBank/DDBJ databases">
        <authorList>
            <consortium name="NIH - Xenopus Gene Collection (XGC) project"/>
        </authorList>
    </citation>
    <scope>NUCLEOTIDE SEQUENCE [LARGE SCALE MRNA]</scope>
    <source>
        <tissue>Embryo</tissue>
    </source>
</reference>
<organism>
    <name type="scientific">Xenopus laevis</name>
    <name type="common">African clawed frog</name>
    <dbReference type="NCBI Taxonomy" id="8355"/>
    <lineage>
        <taxon>Eukaryota</taxon>
        <taxon>Metazoa</taxon>
        <taxon>Chordata</taxon>
        <taxon>Craniata</taxon>
        <taxon>Vertebrata</taxon>
        <taxon>Euteleostomi</taxon>
        <taxon>Amphibia</taxon>
        <taxon>Batrachia</taxon>
        <taxon>Anura</taxon>
        <taxon>Pipoidea</taxon>
        <taxon>Pipidae</taxon>
        <taxon>Xenopodinae</taxon>
        <taxon>Xenopus</taxon>
        <taxon>Xenopus</taxon>
    </lineage>
</organism>
<accession>Q6NUH3</accession>
<name>NOSIP_XENLA</name>
<sequence length="298" mass="33304">MTRHGKNCTAGAVYTYYEKKKDTVASGYGTQTVRLSKDAVKDFDCCCLSLQPCKDPVVTSDGYIYEKESILEYILHQKKEIARQMKAYEKQKNSKKAEMEELNKAAKESKMKAFLDKEMTIVSKPLNPFTRKSDSGIDAAEPSCSQQSSEEKNKQLPSFWIPSLTPEAKTSLVKKPDKTVYCPMSGRPLKMKDLMPVNFTRVDEKVDRVGLINRQDRYVCAVTRDMLGNSVPCAVLRPSGAVVTMECVEKLIKKDMIDPISGDKLSERDIIMLQRGGTGFSGSGVLLQAKEARPVMQA</sequence>
<gene>
    <name type="primary">nosip</name>
</gene>
<feature type="chain" id="PRO_0000280589" description="Nitric oxide synthase-interacting protein">
    <location>
        <begin position="1"/>
        <end position="298"/>
    </location>
</feature>
<feature type="region of interest" description="Disordered" evidence="4">
    <location>
        <begin position="132"/>
        <end position="156"/>
    </location>
</feature>
<feature type="short sequence motif" description="Nuclear localization signal" evidence="1">
    <location>
        <begin position="78"/>
        <end position="101"/>
    </location>
</feature>
<keyword id="KW-0963">Cytoplasm</keyword>
<keyword id="KW-0217">Developmental protein</keyword>
<keyword id="KW-0539">Nucleus</keyword>
<keyword id="KW-1185">Reference proteome</keyword>
<keyword id="KW-0808">Transferase</keyword>
<keyword id="KW-0833">Ubl conjugation pathway</keyword>
<protein>
    <recommendedName>
        <fullName>Nitric oxide synthase-interacting protein</fullName>
    </recommendedName>
    <alternativeName>
        <fullName>E3 ubiquitin-protein ligase NOSIP</fullName>
        <ecNumber>2.3.2.27</ecNumber>
    </alternativeName>
    <alternativeName>
        <fullName evidence="5">RING-type E3 ubiquitin transferase NOSIP</fullName>
    </alternativeName>
</protein>
<dbReference type="EC" id="2.3.2.27"/>
<dbReference type="EMBL" id="BC068614">
    <property type="protein sequence ID" value="AAH68614.1"/>
    <property type="molecule type" value="mRNA"/>
</dbReference>
<dbReference type="RefSeq" id="NP_001084604.1">
    <property type="nucleotide sequence ID" value="NM_001091135.1"/>
</dbReference>
<dbReference type="SMR" id="Q6NUH3"/>
<dbReference type="DNASU" id="414557"/>
<dbReference type="GeneID" id="414557"/>
<dbReference type="KEGG" id="xla:414557"/>
<dbReference type="AGR" id="Xenbase:XB-GENE-945894"/>
<dbReference type="CTD" id="414557"/>
<dbReference type="Xenbase" id="XB-GENE-945894">
    <property type="gene designation" value="nosip.S"/>
</dbReference>
<dbReference type="OrthoDB" id="116827at2759"/>
<dbReference type="Proteomes" id="UP000186698">
    <property type="component" value="Chromosome 7S"/>
</dbReference>
<dbReference type="Bgee" id="414557">
    <property type="expression patterns" value="Expressed in egg cell and 19 other cell types or tissues"/>
</dbReference>
<dbReference type="GO" id="GO:0005737">
    <property type="term" value="C:cytoplasm"/>
    <property type="evidence" value="ECO:0007669"/>
    <property type="project" value="UniProtKB-SubCell"/>
</dbReference>
<dbReference type="GO" id="GO:0005634">
    <property type="term" value="C:nucleus"/>
    <property type="evidence" value="ECO:0000318"/>
    <property type="project" value="GO_Central"/>
</dbReference>
<dbReference type="GO" id="GO:0061630">
    <property type="term" value="F:ubiquitin protein ligase activity"/>
    <property type="evidence" value="ECO:0007669"/>
    <property type="project" value="InterPro"/>
</dbReference>
<dbReference type="CDD" id="cd16661">
    <property type="entry name" value="RING-Ubox1_NOSIP"/>
    <property type="match status" value="1"/>
</dbReference>
<dbReference type="CDD" id="cd16662">
    <property type="entry name" value="RING-Ubox2_NOSIP"/>
    <property type="match status" value="1"/>
</dbReference>
<dbReference type="FunFam" id="3.30.40.10:FF:000251">
    <property type="entry name" value="Nitric oxide synthase-interacting protein"/>
    <property type="match status" value="1"/>
</dbReference>
<dbReference type="FunFam" id="3.30.40.10:FF:001144">
    <property type="entry name" value="Nitric oxide synthase-interacting protein"/>
    <property type="match status" value="1"/>
</dbReference>
<dbReference type="Gene3D" id="3.30.40.10">
    <property type="entry name" value="Zinc/RING finger domain, C3HC4 (zinc finger)"/>
    <property type="match status" value="2"/>
</dbReference>
<dbReference type="InterPro" id="IPR016818">
    <property type="entry name" value="NOSIP"/>
</dbReference>
<dbReference type="InterPro" id="IPR031790">
    <property type="entry name" value="Znf-NOSIP"/>
</dbReference>
<dbReference type="InterPro" id="IPR013083">
    <property type="entry name" value="Znf_RING/FYVE/PHD"/>
</dbReference>
<dbReference type="PANTHER" id="PTHR13063">
    <property type="entry name" value="ENOS INTERACTING PROTEIN"/>
    <property type="match status" value="1"/>
</dbReference>
<dbReference type="PANTHER" id="PTHR13063:SF10">
    <property type="entry name" value="NITRIC OXIDE SYNTHASE-INTERACTING PROTEIN"/>
    <property type="match status" value="1"/>
</dbReference>
<dbReference type="Pfam" id="PF15906">
    <property type="entry name" value="zf-NOSIP"/>
    <property type="match status" value="1"/>
</dbReference>
<dbReference type="PIRSF" id="PIRSF023577">
    <property type="entry name" value="ENOS_interacting"/>
    <property type="match status" value="1"/>
</dbReference>
<dbReference type="SUPFAM" id="SSF57850">
    <property type="entry name" value="RING/U-box"/>
    <property type="match status" value="2"/>
</dbReference>
<proteinExistence type="evidence at transcript level"/>
<comment type="function">
    <text evidence="2 3">E3 ubiquitin-protein ligase that is essential for proper development of the forebrain, the eye, and the face (By similarity). Negatively regulates nitric oxide production by inducing nitric oxide synthase translocation to actin cytoskeleton and inhibiting its enzymatic activity (By similarity).</text>
</comment>
<comment type="catalytic activity">
    <reaction>
        <text>S-ubiquitinyl-[E2 ubiquitin-conjugating enzyme]-L-cysteine + [acceptor protein]-L-lysine = [E2 ubiquitin-conjugating enzyme]-L-cysteine + N(6)-ubiquitinyl-[acceptor protein]-L-lysine.</text>
        <dbReference type="EC" id="2.3.2.27"/>
    </reaction>
</comment>
<comment type="subcellular location">
    <subcellularLocation>
        <location evidence="3">Cytoplasm</location>
    </subcellularLocation>
    <subcellularLocation>
        <location evidence="3">Nucleus</location>
    </subcellularLocation>
    <text evidence="3">Translocates from nucleus to cytoplasm in the G2 phase of the cell cycle.</text>
</comment>
<comment type="similarity">
    <text evidence="5">Belongs to the NOSIP family.</text>
</comment>
<evidence type="ECO:0000250" key="1"/>
<evidence type="ECO:0000250" key="2">
    <source>
        <dbReference type="UniProtKB" id="Q9D6T0"/>
    </source>
</evidence>
<evidence type="ECO:0000250" key="3">
    <source>
        <dbReference type="UniProtKB" id="Q9Y314"/>
    </source>
</evidence>
<evidence type="ECO:0000256" key="4">
    <source>
        <dbReference type="SAM" id="MobiDB-lite"/>
    </source>
</evidence>
<evidence type="ECO:0000305" key="5"/>